<gene>
    <name evidence="1" type="primary">rpsJ</name>
    <name type="ordered locus">BPSL3214</name>
</gene>
<evidence type="ECO:0000255" key="1">
    <source>
        <dbReference type="HAMAP-Rule" id="MF_00508"/>
    </source>
</evidence>
<evidence type="ECO:0000305" key="2"/>
<sequence length="103" mass="11828">MQQQKIRIRLKAFDYRLIDQSAAEIVDTAKRTGAIVRGPVPLPTRIQRFDILRSPHVNKTSRDQLEIRTHQRLMDIVDPTDKTVDALMKLDLPAGVDVEIKLQ</sequence>
<dbReference type="EMBL" id="BX571965">
    <property type="protein sequence ID" value="CAH37225.1"/>
    <property type="molecule type" value="Genomic_DNA"/>
</dbReference>
<dbReference type="RefSeq" id="WP_004199280.1">
    <property type="nucleotide sequence ID" value="NZ_CP009538.1"/>
</dbReference>
<dbReference type="RefSeq" id="YP_109808.1">
    <property type="nucleotide sequence ID" value="NC_006350.1"/>
</dbReference>
<dbReference type="SMR" id="Q63Q10"/>
<dbReference type="STRING" id="272560.BPSL3214"/>
<dbReference type="GeneID" id="98107161"/>
<dbReference type="KEGG" id="bps:BPSL3214"/>
<dbReference type="PATRIC" id="fig|272560.51.peg.2024"/>
<dbReference type="eggNOG" id="COG0051">
    <property type="taxonomic scope" value="Bacteria"/>
</dbReference>
<dbReference type="PRO" id="PR:Q63Q10"/>
<dbReference type="Proteomes" id="UP000000605">
    <property type="component" value="Chromosome 1"/>
</dbReference>
<dbReference type="GO" id="GO:1990904">
    <property type="term" value="C:ribonucleoprotein complex"/>
    <property type="evidence" value="ECO:0007669"/>
    <property type="project" value="UniProtKB-KW"/>
</dbReference>
<dbReference type="GO" id="GO:0005840">
    <property type="term" value="C:ribosome"/>
    <property type="evidence" value="ECO:0007669"/>
    <property type="project" value="UniProtKB-KW"/>
</dbReference>
<dbReference type="GO" id="GO:0003735">
    <property type="term" value="F:structural constituent of ribosome"/>
    <property type="evidence" value="ECO:0007669"/>
    <property type="project" value="InterPro"/>
</dbReference>
<dbReference type="GO" id="GO:0000049">
    <property type="term" value="F:tRNA binding"/>
    <property type="evidence" value="ECO:0007669"/>
    <property type="project" value="UniProtKB-UniRule"/>
</dbReference>
<dbReference type="GO" id="GO:0006412">
    <property type="term" value="P:translation"/>
    <property type="evidence" value="ECO:0007669"/>
    <property type="project" value="UniProtKB-UniRule"/>
</dbReference>
<dbReference type="FunFam" id="3.30.70.600:FF:000001">
    <property type="entry name" value="30S ribosomal protein S10"/>
    <property type="match status" value="1"/>
</dbReference>
<dbReference type="Gene3D" id="3.30.70.600">
    <property type="entry name" value="Ribosomal protein S10 domain"/>
    <property type="match status" value="1"/>
</dbReference>
<dbReference type="HAMAP" id="MF_00508">
    <property type="entry name" value="Ribosomal_uS10"/>
    <property type="match status" value="1"/>
</dbReference>
<dbReference type="InterPro" id="IPR001848">
    <property type="entry name" value="Ribosomal_uS10"/>
</dbReference>
<dbReference type="InterPro" id="IPR018268">
    <property type="entry name" value="Ribosomal_uS10_CS"/>
</dbReference>
<dbReference type="InterPro" id="IPR027486">
    <property type="entry name" value="Ribosomal_uS10_dom"/>
</dbReference>
<dbReference type="InterPro" id="IPR036838">
    <property type="entry name" value="Ribosomal_uS10_dom_sf"/>
</dbReference>
<dbReference type="NCBIfam" id="NF001861">
    <property type="entry name" value="PRK00596.1"/>
    <property type="match status" value="1"/>
</dbReference>
<dbReference type="NCBIfam" id="TIGR01049">
    <property type="entry name" value="rpsJ_bact"/>
    <property type="match status" value="1"/>
</dbReference>
<dbReference type="PANTHER" id="PTHR11700">
    <property type="entry name" value="30S RIBOSOMAL PROTEIN S10 FAMILY MEMBER"/>
    <property type="match status" value="1"/>
</dbReference>
<dbReference type="Pfam" id="PF00338">
    <property type="entry name" value="Ribosomal_S10"/>
    <property type="match status" value="1"/>
</dbReference>
<dbReference type="PRINTS" id="PR00971">
    <property type="entry name" value="RIBOSOMALS10"/>
</dbReference>
<dbReference type="SMART" id="SM01403">
    <property type="entry name" value="Ribosomal_S10"/>
    <property type="match status" value="1"/>
</dbReference>
<dbReference type="SUPFAM" id="SSF54999">
    <property type="entry name" value="Ribosomal protein S10"/>
    <property type="match status" value="1"/>
</dbReference>
<dbReference type="PROSITE" id="PS00361">
    <property type="entry name" value="RIBOSOMAL_S10"/>
    <property type="match status" value="1"/>
</dbReference>
<protein>
    <recommendedName>
        <fullName evidence="1">Small ribosomal subunit protein uS10</fullName>
    </recommendedName>
    <alternativeName>
        <fullName evidence="2">30S ribosomal protein S10</fullName>
    </alternativeName>
</protein>
<organism>
    <name type="scientific">Burkholderia pseudomallei (strain K96243)</name>
    <dbReference type="NCBI Taxonomy" id="272560"/>
    <lineage>
        <taxon>Bacteria</taxon>
        <taxon>Pseudomonadati</taxon>
        <taxon>Pseudomonadota</taxon>
        <taxon>Betaproteobacteria</taxon>
        <taxon>Burkholderiales</taxon>
        <taxon>Burkholderiaceae</taxon>
        <taxon>Burkholderia</taxon>
        <taxon>pseudomallei group</taxon>
    </lineage>
</organism>
<proteinExistence type="inferred from homology"/>
<name>RS10_BURPS</name>
<comment type="function">
    <text evidence="1">Involved in the binding of tRNA to the ribosomes.</text>
</comment>
<comment type="subunit">
    <text evidence="1">Part of the 30S ribosomal subunit.</text>
</comment>
<comment type="similarity">
    <text evidence="1">Belongs to the universal ribosomal protein uS10 family.</text>
</comment>
<reference key="1">
    <citation type="journal article" date="2004" name="Proc. Natl. Acad. Sci. U.S.A.">
        <title>Genomic plasticity of the causative agent of melioidosis, Burkholderia pseudomallei.</title>
        <authorList>
            <person name="Holden M.T.G."/>
            <person name="Titball R.W."/>
            <person name="Peacock S.J."/>
            <person name="Cerdeno-Tarraga A.-M."/>
            <person name="Atkins T."/>
            <person name="Crossman L.C."/>
            <person name="Pitt T."/>
            <person name="Churcher C."/>
            <person name="Mungall K.L."/>
            <person name="Bentley S.D."/>
            <person name="Sebaihia M."/>
            <person name="Thomson N.R."/>
            <person name="Bason N."/>
            <person name="Beacham I.R."/>
            <person name="Brooks K."/>
            <person name="Brown K.A."/>
            <person name="Brown N.F."/>
            <person name="Challis G.L."/>
            <person name="Cherevach I."/>
            <person name="Chillingworth T."/>
            <person name="Cronin A."/>
            <person name="Crossett B."/>
            <person name="Davis P."/>
            <person name="DeShazer D."/>
            <person name="Feltwell T."/>
            <person name="Fraser A."/>
            <person name="Hance Z."/>
            <person name="Hauser H."/>
            <person name="Holroyd S."/>
            <person name="Jagels K."/>
            <person name="Keith K.E."/>
            <person name="Maddison M."/>
            <person name="Moule S."/>
            <person name="Price C."/>
            <person name="Quail M.A."/>
            <person name="Rabbinowitsch E."/>
            <person name="Rutherford K."/>
            <person name="Sanders M."/>
            <person name="Simmonds M."/>
            <person name="Songsivilai S."/>
            <person name="Stevens K."/>
            <person name="Tumapa S."/>
            <person name="Vesaratchavest M."/>
            <person name="Whitehead S."/>
            <person name="Yeats C."/>
            <person name="Barrell B.G."/>
            <person name="Oyston P.C.F."/>
            <person name="Parkhill J."/>
        </authorList>
    </citation>
    <scope>NUCLEOTIDE SEQUENCE [LARGE SCALE GENOMIC DNA]</scope>
    <source>
        <strain>K96243</strain>
    </source>
</reference>
<accession>Q63Q10</accession>
<keyword id="KW-1185">Reference proteome</keyword>
<keyword id="KW-0687">Ribonucleoprotein</keyword>
<keyword id="KW-0689">Ribosomal protein</keyword>
<feature type="chain" id="PRO_0000237024" description="Small ribosomal subunit protein uS10">
    <location>
        <begin position="1"/>
        <end position="103"/>
    </location>
</feature>